<sequence>MLQTMKTLTLIPARLGSTRLPNKPLADICGKPMIVHVADRAAAAKLGRTVIATDSEEIFKVVAAHGHEAIMTRGDHESGSDRIYEALAKLDPSGEIDAVVNVQGDLPTIDPDTIRRALLPLEDGPADIATLGVEITVEEEKTNPNVVKIVGSPLAGNRRLRALYFTRATAPYGEGPLYHHIGLYAYRRSALERFVKLGPSPLEKREKLEQLRALEAGMRIDVEIVKTVPLGVDTQADLDRARTFCSQAGTI</sequence>
<protein>
    <recommendedName>
        <fullName evidence="1">3-deoxy-manno-octulosonate cytidylyltransferase</fullName>
        <ecNumber evidence="1">2.7.7.38</ecNumber>
    </recommendedName>
    <alternativeName>
        <fullName evidence="1">CMP-2-keto-3-deoxyoctulosonic acid synthase</fullName>
        <shortName evidence="1">CKS</shortName>
        <shortName evidence="1">CMP-KDO synthase</shortName>
    </alternativeName>
</protein>
<keyword id="KW-0963">Cytoplasm</keyword>
<keyword id="KW-0448">Lipopolysaccharide biosynthesis</keyword>
<keyword id="KW-0548">Nucleotidyltransferase</keyword>
<keyword id="KW-0808">Transferase</keyword>
<dbReference type="EC" id="2.7.7.38" evidence="1"/>
<dbReference type="EMBL" id="CP001488">
    <property type="protein sequence ID" value="ACN99859.1"/>
    <property type="molecule type" value="Genomic_DNA"/>
</dbReference>
<dbReference type="RefSeq" id="WP_002971781.1">
    <property type="nucleotide sequence ID" value="NC_012441.1"/>
</dbReference>
<dbReference type="SMR" id="C0RGA2"/>
<dbReference type="KEGG" id="bmi:BMEA_A0040"/>
<dbReference type="HOGENOM" id="CLU_065038_0_1_5"/>
<dbReference type="UniPathway" id="UPA00030"/>
<dbReference type="UniPathway" id="UPA00358">
    <property type="reaction ID" value="UER00476"/>
</dbReference>
<dbReference type="Proteomes" id="UP000001748">
    <property type="component" value="Chromosome I"/>
</dbReference>
<dbReference type="GO" id="GO:0005829">
    <property type="term" value="C:cytosol"/>
    <property type="evidence" value="ECO:0007669"/>
    <property type="project" value="TreeGrafter"/>
</dbReference>
<dbReference type="GO" id="GO:0008690">
    <property type="term" value="F:3-deoxy-manno-octulosonate cytidylyltransferase activity"/>
    <property type="evidence" value="ECO:0007669"/>
    <property type="project" value="UniProtKB-UniRule"/>
</dbReference>
<dbReference type="GO" id="GO:0033468">
    <property type="term" value="P:CMP-keto-3-deoxy-D-manno-octulosonic acid biosynthetic process"/>
    <property type="evidence" value="ECO:0007669"/>
    <property type="project" value="UniProtKB-UniRule"/>
</dbReference>
<dbReference type="GO" id="GO:0009103">
    <property type="term" value="P:lipopolysaccharide biosynthetic process"/>
    <property type="evidence" value="ECO:0007669"/>
    <property type="project" value="UniProtKB-UniRule"/>
</dbReference>
<dbReference type="CDD" id="cd02517">
    <property type="entry name" value="CMP-KDO-Synthetase"/>
    <property type="match status" value="1"/>
</dbReference>
<dbReference type="Gene3D" id="3.90.550.10">
    <property type="entry name" value="Spore Coat Polysaccharide Biosynthesis Protein SpsA, Chain A"/>
    <property type="match status" value="1"/>
</dbReference>
<dbReference type="HAMAP" id="MF_00057">
    <property type="entry name" value="KdsB"/>
    <property type="match status" value="1"/>
</dbReference>
<dbReference type="InterPro" id="IPR003329">
    <property type="entry name" value="Cytidylyl_trans"/>
</dbReference>
<dbReference type="InterPro" id="IPR004528">
    <property type="entry name" value="KdsB"/>
</dbReference>
<dbReference type="InterPro" id="IPR029044">
    <property type="entry name" value="Nucleotide-diphossugar_trans"/>
</dbReference>
<dbReference type="NCBIfam" id="TIGR00466">
    <property type="entry name" value="kdsB"/>
    <property type="match status" value="1"/>
</dbReference>
<dbReference type="NCBIfam" id="NF003948">
    <property type="entry name" value="PRK05450.1-1"/>
    <property type="match status" value="1"/>
</dbReference>
<dbReference type="NCBIfam" id="NF003952">
    <property type="entry name" value="PRK05450.1-5"/>
    <property type="match status" value="1"/>
</dbReference>
<dbReference type="PANTHER" id="PTHR42866">
    <property type="entry name" value="3-DEOXY-MANNO-OCTULOSONATE CYTIDYLYLTRANSFERASE"/>
    <property type="match status" value="1"/>
</dbReference>
<dbReference type="PANTHER" id="PTHR42866:SF2">
    <property type="entry name" value="3-DEOXY-MANNO-OCTULOSONATE CYTIDYLYLTRANSFERASE, MITOCHONDRIAL"/>
    <property type="match status" value="1"/>
</dbReference>
<dbReference type="Pfam" id="PF02348">
    <property type="entry name" value="CTP_transf_3"/>
    <property type="match status" value="1"/>
</dbReference>
<dbReference type="SUPFAM" id="SSF53448">
    <property type="entry name" value="Nucleotide-diphospho-sugar transferases"/>
    <property type="match status" value="1"/>
</dbReference>
<reference key="1">
    <citation type="submission" date="2009-03" db="EMBL/GenBank/DDBJ databases">
        <title>Brucella melitensis ATCC 23457 whole genome shotgun sequencing project.</title>
        <authorList>
            <person name="Setubal J.C."/>
            <person name="Boyle S."/>
            <person name="Crasta O.R."/>
            <person name="Gillespie J.J."/>
            <person name="Kenyon R.W."/>
            <person name="Lu J."/>
            <person name="Mane S."/>
            <person name="Nagrani S."/>
            <person name="Shallom J.M."/>
            <person name="Shallom S."/>
            <person name="Shukla M."/>
            <person name="Snyder E.E."/>
            <person name="Sobral B.W."/>
            <person name="Wattam A.R."/>
            <person name="Will R."/>
            <person name="Williams K."/>
            <person name="Yoo H."/>
            <person name="Munk C."/>
            <person name="Tapia R."/>
            <person name="Han C."/>
            <person name="Detter J.C."/>
            <person name="Bruce D."/>
            <person name="Brettin T.S."/>
        </authorList>
    </citation>
    <scope>NUCLEOTIDE SEQUENCE [LARGE SCALE GENOMIC DNA]</scope>
    <source>
        <strain>ATCC 23457</strain>
    </source>
</reference>
<accession>C0RGA2</accession>
<name>KDSB_BRUMB</name>
<comment type="function">
    <text evidence="1">Activates KDO (a required 8-carbon sugar) for incorporation into bacterial lipopolysaccharide in Gram-negative bacteria.</text>
</comment>
<comment type="catalytic activity">
    <reaction evidence="1">
        <text>3-deoxy-alpha-D-manno-oct-2-ulosonate + CTP = CMP-3-deoxy-beta-D-manno-octulosonate + diphosphate</text>
        <dbReference type="Rhea" id="RHEA:23448"/>
        <dbReference type="ChEBI" id="CHEBI:33019"/>
        <dbReference type="ChEBI" id="CHEBI:37563"/>
        <dbReference type="ChEBI" id="CHEBI:85986"/>
        <dbReference type="ChEBI" id="CHEBI:85987"/>
        <dbReference type="EC" id="2.7.7.38"/>
    </reaction>
</comment>
<comment type="pathway">
    <text evidence="1">Nucleotide-sugar biosynthesis; CMP-3-deoxy-D-manno-octulosonate biosynthesis; CMP-3-deoxy-D-manno-octulosonate from 3-deoxy-D-manno-octulosonate and CTP: step 1/1.</text>
</comment>
<comment type="pathway">
    <text evidence="1">Bacterial outer membrane biogenesis; lipopolysaccharide biosynthesis.</text>
</comment>
<comment type="subcellular location">
    <subcellularLocation>
        <location evidence="1">Cytoplasm</location>
    </subcellularLocation>
</comment>
<comment type="similarity">
    <text evidence="1">Belongs to the KdsB family.</text>
</comment>
<evidence type="ECO:0000255" key="1">
    <source>
        <dbReference type="HAMAP-Rule" id="MF_00057"/>
    </source>
</evidence>
<proteinExistence type="inferred from homology"/>
<organism>
    <name type="scientific">Brucella melitensis biotype 2 (strain ATCC 23457)</name>
    <dbReference type="NCBI Taxonomy" id="546272"/>
    <lineage>
        <taxon>Bacteria</taxon>
        <taxon>Pseudomonadati</taxon>
        <taxon>Pseudomonadota</taxon>
        <taxon>Alphaproteobacteria</taxon>
        <taxon>Hyphomicrobiales</taxon>
        <taxon>Brucellaceae</taxon>
        <taxon>Brucella/Ochrobactrum group</taxon>
        <taxon>Brucella</taxon>
    </lineage>
</organism>
<feature type="chain" id="PRO_1000117797" description="3-deoxy-manno-octulosonate cytidylyltransferase">
    <location>
        <begin position="1"/>
        <end position="251"/>
    </location>
</feature>
<gene>
    <name evidence="1" type="primary">kdsB</name>
    <name type="ordered locus">BMEA_A0040</name>
</gene>